<sequence length="416" mass="47416">MRVACRRPHHLTYRHTAYTIIIFYILHRVTCNSTTTNTASITSPNTASTTFVTSVFSTPNNNTSTTPHTSVTSQASTIGNITNVTSDLSTFTTVYSTFNTSYANISNTAATTELISTNTNTILSFTNVTANATSSYNTTITVTITSDETSHNVSTNTALISTPWLTNCSATTYTTYNRTNSSNACHTETTIIRFKETNTTGIEGSNVTIKGNSTWDCLSVAWIRHYNRSTHGHHLGHRKNAHTQSWYWLRILTSHTVCHSQHERPSLYHDLCRSCNNTELHLYDLNITNSGRYSRRCFKENYFTGHHEDENFYLLVTPKNHTEAINATFVCPRYNTDIENEDREKGSQHTNNTHHHKRNLYHSSQRSRTVWTIVLVCMACIVLFFARRAFNKKYHMLQDTVSESEFIVRYHTEHED</sequence>
<dbReference type="EMBL" id="X17403">
    <property type="protein sequence ID" value="CAA35460.1"/>
    <property type="molecule type" value="Genomic_DNA"/>
</dbReference>
<dbReference type="EMBL" id="X17403">
    <property type="protein sequence ID" value="CAA35298.1"/>
    <property type="molecule type" value="Genomic_DNA"/>
</dbReference>
<dbReference type="EMBL" id="BK000394">
    <property type="protein sequence ID" value="DAA00093.1"/>
    <property type="molecule type" value="Genomic_DNA"/>
</dbReference>
<dbReference type="EMBL" id="BK000394">
    <property type="protein sequence ID" value="DAA00230.1"/>
    <property type="molecule type" value="Genomic_DNA"/>
</dbReference>
<dbReference type="PIR" id="S09761">
    <property type="entry name" value="S09761"/>
</dbReference>
<dbReference type="Proteomes" id="UP000008991">
    <property type="component" value="Segment"/>
</dbReference>
<dbReference type="Proteomes" id="UP000008992">
    <property type="component" value="Segment"/>
</dbReference>
<proteinExistence type="predicted"/>
<accession>P16810</accession>
<accession>Q7M574</accession>
<protein>
    <recommendedName>
        <fullName>Uncharacterized protein IRL12</fullName>
        <shortName>TRL12</shortName>
    </recommendedName>
</protein>
<organism>
    <name type="scientific">Human cytomegalovirus (strain AD169)</name>
    <name type="common">HHV-5</name>
    <name type="synonym">Human herpesvirus 5</name>
    <dbReference type="NCBI Taxonomy" id="10360"/>
    <lineage>
        <taxon>Viruses</taxon>
        <taxon>Duplodnaviria</taxon>
        <taxon>Heunggongvirae</taxon>
        <taxon>Peploviricota</taxon>
        <taxon>Herviviricetes</taxon>
        <taxon>Herpesvirales</taxon>
        <taxon>Orthoherpesviridae</taxon>
        <taxon>Betaherpesvirinae</taxon>
        <taxon>Cytomegalovirus</taxon>
        <taxon>Cytomegalovirus humanbeta5</taxon>
        <taxon>Human cytomegalovirus</taxon>
    </lineage>
</organism>
<evidence type="ECO:0000256" key="1">
    <source>
        <dbReference type="SAM" id="MobiDB-lite"/>
    </source>
</evidence>
<organismHost>
    <name type="scientific">Homo sapiens</name>
    <name type="common">Human</name>
    <dbReference type="NCBI Taxonomy" id="9606"/>
</organismHost>
<keyword id="KW-1185">Reference proteome</keyword>
<reference key="1">
    <citation type="journal article" date="1990" name="Curr. Top. Microbiol. Immunol.">
        <title>Analysis of the protein-coding content of the sequence of human cytomegalovirus strain AD169.</title>
        <authorList>
            <person name="Chee M.S."/>
            <person name="Bankier A.T."/>
            <person name="Beck S."/>
            <person name="Bohni R."/>
            <person name="Brown C.M."/>
            <person name="Cerny R."/>
            <person name="Horsnell T."/>
            <person name="Hutchison C.A. III"/>
            <person name="Kouzarides T."/>
            <person name="Martignetti J.A."/>
            <person name="Preddie E."/>
            <person name="Satchwell S.C."/>
            <person name="Tomlinson P."/>
            <person name="Weston K.M."/>
            <person name="Barrell B.G."/>
        </authorList>
    </citation>
    <scope>NUCLEOTIDE SEQUENCE [LARGE SCALE GENOMIC DNA]</scope>
</reference>
<reference key="2">
    <citation type="journal article" date="2003" name="J. Gen. Virol.">
        <title>The human cytomegalovirus genome revisited: comparison with the chimpanzee cytomegalovirus genome.</title>
        <authorList>
            <person name="Davison A.J."/>
            <person name="Dolan A."/>
            <person name="Akter P."/>
            <person name="Addison C."/>
            <person name="Dargan D.J."/>
            <person name="Alcendor D.J."/>
            <person name="McGeoch D.J."/>
            <person name="Hayward G.S."/>
        </authorList>
    </citation>
    <scope>GENOME REANNOTATION</scope>
</reference>
<reference key="3">
    <citation type="journal article" date="2003" name="J. Gen. Virol.">
        <authorList>
            <person name="Davison A.J."/>
            <person name="Dolan A."/>
            <person name="Akter P."/>
            <person name="Addison C."/>
            <person name="Dargan D.J."/>
            <person name="Alcendor D.J."/>
            <person name="McGeoch D.J."/>
            <person name="Hayward G.S."/>
        </authorList>
    </citation>
    <scope>ERRATUM OF PUBMED:12533697</scope>
</reference>
<name>IR12_HCMVA</name>
<feature type="chain" id="PRO_0000115258" description="Uncharacterized protein IRL12">
    <location>
        <begin position="1"/>
        <end position="416"/>
    </location>
</feature>
<feature type="region of interest" description="Disordered" evidence="1">
    <location>
        <begin position="341"/>
        <end position="360"/>
    </location>
</feature>